<accession>Q4QQY7</accession>
<evidence type="ECO:0000250" key="1">
    <source>
        <dbReference type="UniProtKB" id="Q9BXR0"/>
    </source>
</evidence>
<evidence type="ECO:0000255" key="2">
    <source>
        <dbReference type="HAMAP-Rule" id="MF_03218"/>
    </source>
</evidence>
<reference key="1">
    <citation type="submission" date="2005-06" db="EMBL/GenBank/DDBJ databases">
        <authorList>
            <consortium name="NIH - Xenopus Gene Collection (XGC) project"/>
        </authorList>
    </citation>
    <scope>NUCLEOTIDE SEQUENCE [LARGE SCALE MRNA]</scope>
    <source>
        <tissue>Egg</tissue>
    </source>
</reference>
<gene>
    <name evidence="2" type="primary">qtrt1</name>
</gene>
<feature type="chain" id="PRO_0000383948" description="Queuine tRNA-ribosyltransferase catalytic subunit 1">
    <location>
        <begin position="1"/>
        <end position="396"/>
    </location>
</feature>
<feature type="region of interest" description="RNA binding" evidence="2">
    <location>
        <begin position="254"/>
        <end position="260"/>
    </location>
</feature>
<feature type="region of interest" description="RNA binding; important for wobble base 34 recognition" evidence="2">
    <location>
        <begin position="278"/>
        <end position="282"/>
    </location>
</feature>
<feature type="active site" description="Proton acceptor" evidence="2">
    <location>
        <position position="99"/>
    </location>
</feature>
<feature type="active site" description="Nucleophile" evidence="2">
    <location>
        <position position="273"/>
    </location>
</feature>
<feature type="binding site" evidence="2">
    <location>
        <begin position="99"/>
        <end position="103"/>
    </location>
    <ligand>
        <name>queuine</name>
        <dbReference type="ChEBI" id="CHEBI:17433"/>
    </ligand>
</feature>
<feature type="binding site" evidence="2">
    <location>
        <position position="153"/>
    </location>
    <ligand>
        <name>queuine</name>
        <dbReference type="ChEBI" id="CHEBI:17433"/>
    </ligand>
</feature>
<feature type="binding site" evidence="2">
    <location>
        <position position="196"/>
    </location>
    <ligand>
        <name>queuine</name>
        <dbReference type="ChEBI" id="CHEBI:17433"/>
    </ligand>
</feature>
<feature type="binding site" evidence="2">
    <location>
        <position position="223"/>
    </location>
    <ligand>
        <name>queuine</name>
        <dbReference type="ChEBI" id="CHEBI:17433"/>
    </ligand>
</feature>
<feature type="binding site" evidence="2">
    <location>
        <position position="311"/>
    </location>
    <ligand>
        <name>Zn(2+)</name>
        <dbReference type="ChEBI" id="CHEBI:29105"/>
    </ligand>
</feature>
<feature type="binding site" evidence="2">
    <location>
        <position position="313"/>
    </location>
    <ligand>
        <name>Zn(2+)</name>
        <dbReference type="ChEBI" id="CHEBI:29105"/>
    </ligand>
</feature>
<feature type="binding site" evidence="2">
    <location>
        <position position="316"/>
    </location>
    <ligand>
        <name>Zn(2+)</name>
        <dbReference type="ChEBI" id="CHEBI:29105"/>
    </ligand>
</feature>
<feature type="binding site" evidence="2">
    <location>
        <position position="341"/>
    </location>
    <ligand>
        <name>Zn(2+)</name>
        <dbReference type="ChEBI" id="CHEBI:29105"/>
    </ligand>
</feature>
<name>TGT_XENLA</name>
<proteinExistence type="evidence at transcript level"/>
<sequence length="396" mass="44201">MAATKSHALVHRVLAECPVTKARACELQMPHGQVKTPVFMPVGTQGTMKGVTADQLRNLGCEICLGNTYHLGMRPGPEIMKKASGLHGFMNWDRNLLTDSGGFQMVSLVELSKVTEEGVQFRSPYDGKEILLTPEKSIEIQNALGSDIMMQLDDVVSSTISGPRVEEAMHRSIRWLDRCIAANGNPDRQNLFAIIQGGLDAELRKQCLQEMTKRDVPGFAIGGLSGGEEKDHFWRMVTLSTDHLPRDKPRYLMGVGYATDLVVCVALGCDMFDCVFPTRTARFGSALVPWGSLQLKSKQFAKDFQPIDKNCDCPTCQRYSRSYINALFKSDTAAMHHITIHNIAYQLNLMRSVRESILQGRFPQFVQDFMKTMYGNKDKYPQWAVAALETVGITLQ</sequence>
<organism>
    <name type="scientific">Xenopus laevis</name>
    <name type="common">African clawed frog</name>
    <dbReference type="NCBI Taxonomy" id="8355"/>
    <lineage>
        <taxon>Eukaryota</taxon>
        <taxon>Metazoa</taxon>
        <taxon>Chordata</taxon>
        <taxon>Craniata</taxon>
        <taxon>Vertebrata</taxon>
        <taxon>Euteleostomi</taxon>
        <taxon>Amphibia</taxon>
        <taxon>Batrachia</taxon>
        <taxon>Anura</taxon>
        <taxon>Pipoidea</taxon>
        <taxon>Pipidae</taxon>
        <taxon>Xenopodinae</taxon>
        <taxon>Xenopus</taxon>
        <taxon>Xenopus</taxon>
    </lineage>
</organism>
<keyword id="KW-0963">Cytoplasm</keyword>
<keyword id="KW-0328">Glycosyltransferase</keyword>
<keyword id="KW-0472">Membrane</keyword>
<keyword id="KW-0479">Metal-binding</keyword>
<keyword id="KW-0496">Mitochondrion</keyword>
<keyword id="KW-1000">Mitochondrion outer membrane</keyword>
<keyword id="KW-1185">Reference proteome</keyword>
<keyword id="KW-0808">Transferase</keyword>
<keyword id="KW-0819">tRNA processing</keyword>
<keyword id="KW-0862">Zinc</keyword>
<protein>
    <recommendedName>
        <fullName evidence="2">Queuine tRNA-ribosyltransferase catalytic subunit 1</fullName>
        <ecNumber evidence="1 2">2.4.2.64</ecNumber>
    </recommendedName>
    <alternativeName>
        <fullName evidence="2">Guanine insertion enzyme</fullName>
    </alternativeName>
    <alternativeName>
        <fullName evidence="2">tRNA-guanine transglycosylase</fullName>
    </alternativeName>
</protein>
<dbReference type="EC" id="2.4.2.64" evidence="1 2"/>
<dbReference type="EMBL" id="BC097803">
    <property type="protein sequence ID" value="AAH97803.1"/>
    <property type="molecule type" value="mRNA"/>
</dbReference>
<dbReference type="RefSeq" id="NP_001089529.1">
    <property type="nucleotide sequence ID" value="NM_001096060.1"/>
</dbReference>
<dbReference type="SMR" id="Q4QQY7"/>
<dbReference type="DNASU" id="734584"/>
<dbReference type="GeneID" id="734584"/>
<dbReference type="KEGG" id="xla:734584"/>
<dbReference type="AGR" id="Xenbase:XB-GENE-6076294"/>
<dbReference type="CTD" id="734584"/>
<dbReference type="Xenbase" id="XB-GENE-6076294">
    <property type="gene designation" value="qtrt1.S"/>
</dbReference>
<dbReference type="OrthoDB" id="10249838at2759"/>
<dbReference type="Proteomes" id="UP000186698">
    <property type="component" value="Chromosome 3S"/>
</dbReference>
<dbReference type="Bgee" id="734584">
    <property type="expression patterns" value="Expressed in egg cell and 19 other cell types or tissues"/>
</dbReference>
<dbReference type="GO" id="GO:0005829">
    <property type="term" value="C:cytosol"/>
    <property type="evidence" value="ECO:0007669"/>
    <property type="project" value="TreeGrafter"/>
</dbReference>
<dbReference type="GO" id="GO:0005741">
    <property type="term" value="C:mitochondrial outer membrane"/>
    <property type="evidence" value="ECO:0007669"/>
    <property type="project" value="UniProtKB-SubCell"/>
</dbReference>
<dbReference type="GO" id="GO:0046872">
    <property type="term" value="F:metal ion binding"/>
    <property type="evidence" value="ECO:0007669"/>
    <property type="project" value="UniProtKB-KW"/>
</dbReference>
<dbReference type="GO" id="GO:0046982">
    <property type="term" value="F:protein heterodimerization activity"/>
    <property type="evidence" value="ECO:0000250"/>
    <property type="project" value="UniProtKB"/>
</dbReference>
<dbReference type="GO" id="GO:0042803">
    <property type="term" value="F:protein homodimerization activity"/>
    <property type="evidence" value="ECO:0000250"/>
    <property type="project" value="UniProtKB"/>
</dbReference>
<dbReference type="GO" id="GO:0008479">
    <property type="term" value="F:tRNA-guanosine(34) queuine transglycosylase activity"/>
    <property type="evidence" value="ECO:0000250"/>
    <property type="project" value="UniProtKB"/>
</dbReference>
<dbReference type="GO" id="GO:0101030">
    <property type="term" value="P:tRNA-guanine transglycosylation"/>
    <property type="evidence" value="ECO:0000318"/>
    <property type="project" value="GO_Central"/>
</dbReference>
<dbReference type="FunFam" id="3.20.20.105:FF:000001">
    <property type="entry name" value="Queuine tRNA-ribosyltransferase"/>
    <property type="match status" value="1"/>
</dbReference>
<dbReference type="Gene3D" id="3.20.20.105">
    <property type="entry name" value="Queuine tRNA-ribosyltransferase-like"/>
    <property type="match status" value="1"/>
</dbReference>
<dbReference type="HAMAP" id="MF_00168">
    <property type="entry name" value="Q_tRNA_Tgt"/>
    <property type="match status" value="1"/>
</dbReference>
<dbReference type="InterPro" id="IPR004803">
    <property type="entry name" value="TGT"/>
</dbReference>
<dbReference type="InterPro" id="IPR036511">
    <property type="entry name" value="TGT-like_sf"/>
</dbReference>
<dbReference type="InterPro" id="IPR002616">
    <property type="entry name" value="tRNA_ribo_trans-like"/>
</dbReference>
<dbReference type="NCBIfam" id="TIGR00430">
    <property type="entry name" value="Q_tRNA_tgt"/>
    <property type="match status" value="1"/>
</dbReference>
<dbReference type="NCBIfam" id="TIGR00449">
    <property type="entry name" value="tgt_general"/>
    <property type="match status" value="1"/>
</dbReference>
<dbReference type="PANTHER" id="PTHR43530">
    <property type="entry name" value="QUEUINE TRNA-RIBOSYLTRANSFERASE CATALYTIC SUBUNIT 1"/>
    <property type="match status" value="1"/>
</dbReference>
<dbReference type="PANTHER" id="PTHR43530:SF1">
    <property type="entry name" value="QUEUINE TRNA-RIBOSYLTRANSFERASE CATALYTIC SUBUNIT 1"/>
    <property type="match status" value="1"/>
</dbReference>
<dbReference type="Pfam" id="PF01702">
    <property type="entry name" value="TGT"/>
    <property type="match status" value="1"/>
</dbReference>
<dbReference type="SUPFAM" id="SSF51713">
    <property type="entry name" value="tRNA-guanine transglycosylase"/>
    <property type="match status" value="1"/>
</dbReference>
<comment type="function">
    <text evidence="2">Catalytic subunit of the queuine tRNA-ribosyltransferase (TGT) that catalyzes the base-exchange of a guanine (G) residue with queuine (Q) at position 34 (anticodon wobble position) in tRNAs with GU(N) anticodons (tRNA-Asp, -Asn, -His and -Tyr), resulting in the hypermodified nucleoside queuosine (7-(((4,5-cis-dihydroxy-2-cyclopenten-1-yl)amino)methyl)-7-deazaguanosine). Catalysis occurs through a double-displacement mechanism. The nucleophile active site attacks the C1' of nucleotide 34 to detach the guanine base from the RNA, forming a covalent enzyme-RNA intermediate. The proton acceptor active site deprotonates the incoming queuine, allowing a nucleophilic attack on the C1' of the ribose to form the product.</text>
</comment>
<comment type="catalytic activity">
    <reaction evidence="2">
        <text>guanosine(34) in tRNA + queuine = queuosine(34) in tRNA + guanine</text>
        <dbReference type="Rhea" id="RHEA:16633"/>
        <dbReference type="Rhea" id="RHEA-COMP:10341"/>
        <dbReference type="Rhea" id="RHEA-COMP:18571"/>
        <dbReference type="ChEBI" id="CHEBI:16235"/>
        <dbReference type="ChEBI" id="CHEBI:17433"/>
        <dbReference type="ChEBI" id="CHEBI:74269"/>
        <dbReference type="ChEBI" id="CHEBI:194431"/>
        <dbReference type="EC" id="2.4.2.64"/>
    </reaction>
</comment>
<comment type="cofactor">
    <cofactor evidence="2">
        <name>Zn(2+)</name>
        <dbReference type="ChEBI" id="CHEBI:29105"/>
    </cofactor>
</comment>
<comment type="subunit">
    <text evidence="2">Heterodimer of a catalytic subunit qtrt1 and an accessory subunit qtrt2.</text>
</comment>
<comment type="subcellular location">
    <subcellularLocation>
        <location evidence="2">Cytoplasm</location>
    </subcellularLocation>
    <subcellularLocation>
        <location evidence="2">Mitochondrion outer membrane</location>
        <topology evidence="2">Peripheral membrane protein</topology>
        <orientation evidence="2">Cytoplasmic side</orientation>
    </subcellularLocation>
    <text evidence="2">Weakly associates with mitochondria, possibly via qtrt2.</text>
</comment>
<comment type="similarity">
    <text evidence="2">Belongs to the queuine tRNA-ribosyltransferase family.</text>
</comment>